<accession>Q8CPW3</accession>
<proteinExistence type="inferred from homology"/>
<evidence type="ECO:0000250" key="1">
    <source>
        <dbReference type="UniProtKB" id="Q99VE8"/>
    </source>
</evidence>
<evidence type="ECO:0000305" key="2"/>
<organism>
    <name type="scientific">Staphylococcus epidermidis (strain ATCC 12228 / FDA PCI 1200)</name>
    <dbReference type="NCBI Taxonomy" id="176280"/>
    <lineage>
        <taxon>Bacteria</taxon>
        <taxon>Bacillati</taxon>
        <taxon>Bacillota</taxon>
        <taxon>Bacilli</taxon>
        <taxon>Bacillales</taxon>
        <taxon>Staphylococcaceae</taxon>
        <taxon>Staphylococcus</taxon>
    </lineage>
</organism>
<dbReference type="EC" id="3.1.3.-" evidence="1"/>
<dbReference type="EMBL" id="AE015929">
    <property type="protein sequence ID" value="AAO04218.1"/>
    <property type="molecule type" value="Genomic_DNA"/>
</dbReference>
<dbReference type="RefSeq" id="NP_764176.1">
    <property type="nucleotide sequence ID" value="NC_004461.1"/>
</dbReference>
<dbReference type="RefSeq" id="WP_001831998.1">
    <property type="nucleotide sequence ID" value="NZ_WBME01000029.1"/>
</dbReference>
<dbReference type="SMR" id="Q8CPW3"/>
<dbReference type="KEGG" id="sep:SE_0621"/>
<dbReference type="PATRIC" id="fig|176280.10.peg.593"/>
<dbReference type="eggNOG" id="COG0647">
    <property type="taxonomic scope" value="Bacteria"/>
</dbReference>
<dbReference type="HOGENOM" id="CLU_043473_1_1_9"/>
<dbReference type="OrthoDB" id="9810449at2"/>
<dbReference type="Proteomes" id="UP000001411">
    <property type="component" value="Chromosome"/>
</dbReference>
<dbReference type="GO" id="GO:0005737">
    <property type="term" value="C:cytoplasm"/>
    <property type="evidence" value="ECO:0007669"/>
    <property type="project" value="TreeGrafter"/>
</dbReference>
<dbReference type="GO" id="GO:0046872">
    <property type="term" value="F:metal ion binding"/>
    <property type="evidence" value="ECO:0007669"/>
    <property type="project" value="UniProtKB-KW"/>
</dbReference>
<dbReference type="GO" id="GO:0016791">
    <property type="term" value="F:phosphatase activity"/>
    <property type="evidence" value="ECO:0007669"/>
    <property type="project" value="TreeGrafter"/>
</dbReference>
<dbReference type="CDD" id="cd07530">
    <property type="entry name" value="HAD_Pase_UmpH-like"/>
    <property type="match status" value="1"/>
</dbReference>
<dbReference type="FunFam" id="3.40.50.1000:FF:000053">
    <property type="entry name" value="TIGR01457 family HAD hydrolase"/>
    <property type="match status" value="1"/>
</dbReference>
<dbReference type="Gene3D" id="3.40.50.1000">
    <property type="entry name" value="HAD superfamily/HAD-like"/>
    <property type="match status" value="2"/>
</dbReference>
<dbReference type="InterPro" id="IPR036412">
    <property type="entry name" value="HAD-like_sf"/>
</dbReference>
<dbReference type="InterPro" id="IPR006357">
    <property type="entry name" value="HAD-SF_hydro_IIA"/>
</dbReference>
<dbReference type="InterPro" id="IPR006354">
    <property type="entry name" value="HAD-SF_hydro_IIA_hyp1"/>
</dbReference>
<dbReference type="InterPro" id="IPR023214">
    <property type="entry name" value="HAD_sf"/>
</dbReference>
<dbReference type="NCBIfam" id="TIGR01460">
    <property type="entry name" value="HAD-SF-IIA"/>
    <property type="match status" value="1"/>
</dbReference>
<dbReference type="NCBIfam" id="TIGR01457">
    <property type="entry name" value="HAD-SF-IIA-hyp2"/>
    <property type="match status" value="1"/>
</dbReference>
<dbReference type="PANTHER" id="PTHR19288">
    <property type="entry name" value="4-NITROPHENYLPHOSPHATASE-RELATED"/>
    <property type="match status" value="1"/>
</dbReference>
<dbReference type="PANTHER" id="PTHR19288:SF46">
    <property type="entry name" value="HALOACID DEHALOGENASE-LIKE HYDROLASE DOMAIN-CONTAINING PROTEIN 2"/>
    <property type="match status" value="1"/>
</dbReference>
<dbReference type="Pfam" id="PF13344">
    <property type="entry name" value="Hydrolase_6"/>
    <property type="match status" value="1"/>
</dbReference>
<dbReference type="Pfam" id="PF13242">
    <property type="entry name" value="Hydrolase_like"/>
    <property type="match status" value="1"/>
</dbReference>
<dbReference type="PIRSF" id="PIRSF000915">
    <property type="entry name" value="PGP-type_phosphatase"/>
    <property type="match status" value="1"/>
</dbReference>
<dbReference type="SFLD" id="SFLDG01139">
    <property type="entry name" value="C2.A:_Pyridoxal_Phosphate_Phos"/>
    <property type="match status" value="1"/>
</dbReference>
<dbReference type="SFLD" id="SFLDS00003">
    <property type="entry name" value="Haloacid_Dehalogenase"/>
    <property type="match status" value="1"/>
</dbReference>
<dbReference type="SUPFAM" id="SSF56784">
    <property type="entry name" value="HAD-like"/>
    <property type="match status" value="1"/>
</dbReference>
<reference key="1">
    <citation type="journal article" date="2003" name="Mol. Microbiol.">
        <title>Genome-based analysis of virulence genes in a non-biofilm-forming Staphylococcus epidermidis strain (ATCC 12228).</title>
        <authorList>
            <person name="Zhang Y.-Q."/>
            <person name="Ren S.-X."/>
            <person name="Li H.-L."/>
            <person name="Wang Y.-X."/>
            <person name="Fu G."/>
            <person name="Yang J."/>
            <person name="Qin Z.-Q."/>
            <person name="Miao Y.-G."/>
            <person name="Wang W.-Y."/>
            <person name="Chen R.-S."/>
            <person name="Shen Y."/>
            <person name="Chen Z."/>
            <person name="Yuan Z.-H."/>
            <person name="Zhao G.-P."/>
            <person name="Qu D."/>
            <person name="Danchin A."/>
            <person name="Wen Y.-M."/>
        </authorList>
    </citation>
    <scope>NUCLEOTIDE SEQUENCE [LARGE SCALE GENOMIC DNA]</scope>
    <source>
        <strain>ATCC 12228 / FDA PCI 1200</strain>
    </source>
</reference>
<protein>
    <recommendedName>
        <fullName evidence="1">Acid sugar phosphatase</fullName>
        <ecNumber evidence="1">3.1.3.-</ecNumber>
    </recommendedName>
</protein>
<name>NAGD_STAES</name>
<comment type="function">
    <text evidence="1">Catalyzes the dephosphorylation of 2-6 carbon acid sugars in vitro.</text>
</comment>
<comment type="cofactor">
    <cofactor evidence="1">
        <name>Mg(2+)</name>
        <dbReference type="ChEBI" id="CHEBI:18420"/>
    </cofactor>
</comment>
<comment type="similarity">
    <text evidence="2">Belongs to the HAD-like hydrolase superfamily. NagD family.</text>
</comment>
<sequence>MKHYQAYLIDLDGTMYKGTDEIDGAAQFIDYLNNNHIPHLYVTNNSTKTPVQVTEKLREMHIDAKPDEVVTSALATADYISEQHPNATVYMIGGHGLKTALTDAGLSIKNDEHVDYVVIGLDEKVTYEKLSIATLAVRNGAKFISTNPDVSIPKERGFLPGNGAITSVVSVSTGIQPEFIGKPEPIIMSKSLDILGLEKSEVAMVGDLYDTDIMSGINVGIDTIHVQTGVSTYEDIQSKEIPPTYSFKDLNVAIAELEK</sequence>
<feature type="chain" id="PRO_0000271489" description="Acid sugar phosphatase">
    <location>
        <begin position="1"/>
        <end position="259"/>
    </location>
</feature>
<keyword id="KW-0378">Hydrolase</keyword>
<keyword id="KW-0460">Magnesium</keyword>
<keyword id="KW-0479">Metal-binding</keyword>
<gene>
    <name type="primary">nagD</name>
    <name type="ordered locus">SE_0621</name>
</gene>